<dbReference type="EC" id="7.-.-.-" evidence="1"/>
<dbReference type="EMBL" id="AM933173">
    <property type="protein sequence ID" value="CAR37520.1"/>
    <property type="molecule type" value="Genomic_DNA"/>
</dbReference>
<dbReference type="RefSeq" id="WP_000915661.1">
    <property type="nucleotide sequence ID" value="NC_011274.1"/>
</dbReference>
<dbReference type="SMR" id="B5RAK2"/>
<dbReference type="KEGG" id="seg:SG1661"/>
<dbReference type="HOGENOM" id="CLU_010808_2_1_6"/>
<dbReference type="Proteomes" id="UP000008321">
    <property type="component" value="Chromosome"/>
</dbReference>
<dbReference type="GO" id="GO:0005886">
    <property type="term" value="C:plasma membrane"/>
    <property type="evidence" value="ECO:0007669"/>
    <property type="project" value="UniProtKB-SubCell"/>
</dbReference>
<dbReference type="GO" id="GO:0051539">
    <property type="term" value="F:4 iron, 4 sulfur cluster binding"/>
    <property type="evidence" value="ECO:0007669"/>
    <property type="project" value="UniProtKB-KW"/>
</dbReference>
<dbReference type="GO" id="GO:0009055">
    <property type="term" value="F:electron transfer activity"/>
    <property type="evidence" value="ECO:0007669"/>
    <property type="project" value="InterPro"/>
</dbReference>
<dbReference type="GO" id="GO:0046872">
    <property type="term" value="F:metal ion binding"/>
    <property type="evidence" value="ECO:0007669"/>
    <property type="project" value="UniProtKB-KW"/>
</dbReference>
<dbReference type="GO" id="GO:0022900">
    <property type="term" value="P:electron transport chain"/>
    <property type="evidence" value="ECO:0007669"/>
    <property type="project" value="UniProtKB-UniRule"/>
</dbReference>
<dbReference type="Gene3D" id="3.30.70.20">
    <property type="match status" value="1"/>
</dbReference>
<dbReference type="Gene3D" id="3.40.50.11540">
    <property type="entry name" value="NADH-ubiquinone oxidoreductase 51kDa subunit"/>
    <property type="match status" value="1"/>
</dbReference>
<dbReference type="HAMAP" id="MF_00461">
    <property type="entry name" value="RsxC_RnfC"/>
    <property type="match status" value="1"/>
</dbReference>
<dbReference type="InterPro" id="IPR017896">
    <property type="entry name" value="4Fe4S_Fe-S-bd"/>
</dbReference>
<dbReference type="InterPro" id="IPR017900">
    <property type="entry name" value="4Fe4S_Fe_S_CS"/>
</dbReference>
<dbReference type="InterPro" id="IPR010208">
    <property type="entry name" value="Ion_transpt_RnfC/RsxC"/>
</dbReference>
<dbReference type="InterPro" id="IPR011538">
    <property type="entry name" value="Nuo51_FMN-bd"/>
</dbReference>
<dbReference type="InterPro" id="IPR037225">
    <property type="entry name" value="Nuo51_FMN-bd_sf"/>
</dbReference>
<dbReference type="InterPro" id="IPR026902">
    <property type="entry name" value="RnfC_N"/>
</dbReference>
<dbReference type="InterPro" id="IPR019554">
    <property type="entry name" value="Soluble_ligand-bd"/>
</dbReference>
<dbReference type="NCBIfam" id="NF003454">
    <property type="entry name" value="PRK05035.1"/>
    <property type="match status" value="1"/>
</dbReference>
<dbReference type="NCBIfam" id="TIGR01945">
    <property type="entry name" value="rnfC"/>
    <property type="match status" value="1"/>
</dbReference>
<dbReference type="PANTHER" id="PTHR43034">
    <property type="entry name" value="ION-TRANSLOCATING OXIDOREDUCTASE COMPLEX SUBUNIT C"/>
    <property type="match status" value="1"/>
</dbReference>
<dbReference type="PANTHER" id="PTHR43034:SF2">
    <property type="entry name" value="ION-TRANSLOCATING OXIDOREDUCTASE COMPLEX SUBUNIT C"/>
    <property type="match status" value="1"/>
</dbReference>
<dbReference type="Pfam" id="PF01512">
    <property type="entry name" value="Complex1_51K"/>
    <property type="match status" value="1"/>
</dbReference>
<dbReference type="Pfam" id="PF12838">
    <property type="entry name" value="Fer4_7"/>
    <property type="match status" value="1"/>
</dbReference>
<dbReference type="Pfam" id="PF13375">
    <property type="entry name" value="RnfC_N"/>
    <property type="match status" value="1"/>
</dbReference>
<dbReference type="Pfam" id="PF10531">
    <property type="entry name" value="SLBB"/>
    <property type="match status" value="1"/>
</dbReference>
<dbReference type="SUPFAM" id="SSF46548">
    <property type="entry name" value="alpha-helical ferredoxin"/>
    <property type="match status" value="1"/>
</dbReference>
<dbReference type="SUPFAM" id="SSF142019">
    <property type="entry name" value="Nqo1 FMN-binding domain-like"/>
    <property type="match status" value="1"/>
</dbReference>
<dbReference type="PROSITE" id="PS00198">
    <property type="entry name" value="4FE4S_FER_1"/>
    <property type="match status" value="2"/>
</dbReference>
<dbReference type="PROSITE" id="PS51379">
    <property type="entry name" value="4FE4S_FER_2"/>
    <property type="match status" value="2"/>
</dbReference>
<protein>
    <recommendedName>
        <fullName evidence="1">Ion-translocating oxidoreductase complex subunit C</fullName>
        <ecNumber evidence="1">7.-.-.-</ecNumber>
    </recommendedName>
    <alternativeName>
        <fullName evidence="1">Rsx electron transport complex subunit C</fullName>
    </alternativeName>
</protein>
<accession>B5RAK2</accession>
<feature type="chain" id="PRO_1000125364" description="Ion-translocating oxidoreductase complex subunit C">
    <location>
        <begin position="1"/>
        <end position="673"/>
    </location>
</feature>
<feature type="domain" description="4Fe-4S ferredoxin-type 1" evidence="1">
    <location>
        <begin position="368"/>
        <end position="397"/>
    </location>
</feature>
<feature type="domain" description="4Fe-4S ferredoxin-type 2" evidence="1">
    <location>
        <begin position="407"/>
        <end position="436"/>
    </location>
</feature>
<feature type="region of interest" description="Disordered" evidence="2">
    <location>
        <begin position="534"/>
        <end position="553"/>
    </location>
</feature>
<feature type="region of interest" description="Disordered" evidence="2">
    <location>
        <begin position="563"/>
        <end position="653"/>
    </location>
</feature>
<feature type="binding site" evidence="1">
    <location>
        <position position="377"/>
    </location>
    <ligand>
        <name>[4Fe-4S] cluster</name>
        <dbReference type="ChEBI" id="CHEBI:49883"/>
        <label>1</label>
    </ligand>
</feature>
<feature type="binding site" evidence="1">
    <location>
        <position position="380"/>
    </location>
    <ligand>
        <name>[4Fe-4S] cluster</name>
        <dbReference type="ChEBI" id="CHEBI:49883"/>
        <label>1</label>
    </ligand>
</feature>
<feature type="binding site" evidence="1">
    <location>
        <position position="383"/>
    </location>
    <ligand>
        <name>[4Fe-4S] cluster</name>
        <dbReference type="ChEBI" id="CHEBI:49883"/>
        <label>1</label>
    </ligand>
</feature>
<feature type="binding site" evidence="1">
    <location>
        <position position="387"/>
    </location>
    <ligand>
        <name>[4Fe-4S] cluster</name>
        <dbReference type="ChEBI" id="CHEBI:49883"/>
        <label>2</label>
    </ligand>
</feature>
<feature type="binding site" evidence="1">
    <location>
        <position position="416"/>
    </location>
    <ligand>
        <name>[4Fe-4S] cluster</name>
        <dbReference type="ChEBI" id="CHEBI:49883"/>
        <label>2</label>
    </ligand>
</feature>
<feature type="binding site" evidence="1">
    <location>
        <position position="419"/>
    </location>
    <ligand>
        <name>[4Fe-4S] cluster</name>
        <dbReference type="ChEBI" id="CHEBI:49883"/>
        <label>2</label>
    </ligand>
</feature>
<feature type="binding site" evidence="1">
    <location>
        <position position="422"/>
    </location>
    <ligand>
        <name>[4Fe-4S] cluster</name>
        <dbReference type="ChEBI" id="CHEBI:49883"/>
        <label>2</label>
    </ligand>
</feature>
<feature type="binding site" evidence="1">
    <location>
        <position position="426"/>
    </location>
    <ligand>
        <name>[4Fe-4S] cluster</name>
        <dbReference type="ChEBI" id="CHEBI:49883"/>
        <label>1</label>
    </ligand>
</feature>
<proteinExistence type="inferred from homology"/>
<sequence length="673" mass="72062">MLKLFSAFRKDKIWDFDGGIHPPEMKTQSNGTPLRQVPLAPRFVIPLKQHIGAEGELCVSVGDRVLRGQALTRGRGRMLPVHAPTSGTVIAIAPHSTAHPSALAELSVIIDADGEDRWIEREGWSDYRAHSREALIERIHQYGVAGLGGAGFPTGVKLQGGGDKITTLIINAAECEPYITADDRLMQDCAAQIVEGIRILAHILQPREVLIGIEDNKPQAISMLRAVLADAHDISLRVIPTKYPSGGAKQLTQILTGKQVPHGGRSSDIGVLMQNVGTAYAVKRAVVDGEPITERVVTLTGEAVSRPGNVWARLGTPVRHLLNDAGFCPSADQMVIMGGPLMGFTLPWLDVPVVKITNCLLAPSVTEMGAPQEEKSCIRCSACADACPADLLPQQLYWFSKGQQHDKATAHHIADCIECGACAWVCPSNIPLVQYFRQEKAEINAIRLEEKRAAEAKARFEARQARLEREKAARLARHKSAAVQPAAKDQDAIAAALARVKEKQAQATQPVVIQAGSLPDNSAVIEAREARKAQARAKQAAHPVADSAISGGAPRKAAVEAAIARAKARKQEQQAGSEPAEPVDPRKAAVEAAIARAKARKQEQQAGSEPAEPVDPRKAAVEAAIARAKARKQEQQAGSEPAEPADPRKAAVAAAIARVQAKKAAQQQVVNED</sequence>
<comment type="function">
    <text evidence="1">Part of a membrane-bound complex that couples electron transfer with translocation of ions across the membrane. Required to maintain the reduced state of SoxR.</text>
</comment>
<comment type="cofactor">
    <cofactor evidence="1">
        <name>[4Fe-4S] cluster</name>
        <dbReference type="ChEBI" id="CHEBI:49883"/>
    </cofactor>
    <text evidence="1">Binds 2 [4Fe-4S] clusters per subunit.</text>
</comment>
<comment type="subunit">
    <text evidence="1">The complex is composed of six subunits: RsxA, RsxB, RsxC, RsxD, RsxE and RsxG.</text>
</comment>
<comment type="subcellular location">
    <subcellularLocation>
        <location evidence="1">Cell inner membrane</location>
        <topology evidence="1">Peripheral membrane protein</topology>
    </subcellularLocation>
</comment>
<comment type="similarity">
    <text evidence="1">Belongs to the 4Fe4S bacterial-type ferredoxin family. RnfC subfamily.</text>
</comment>
<evidence type="ECO:0000255" key="1">
    <source>
        <dbReference type="HAMAP-Rule" id="MF_00461"/>
    </source>
</evidence>
<evidence type="ECO:0000256" key="2">
    <source>
        <dbReference type="SAM" id="MobiDB-lite"/>
    </source>
</evidence>
<organism>
    <name type="scientific">Salmonella gallinarum (strain 287/91 / NCTC 13346)</name>
    <dbReference type="NCBI Taxonomy" id="550538"/>
    <lineage>
        <taxon>Bacteria</taxon>
        <taxon>Pseudomonadati</taxon>
        <taxon>Pseudomonadota</taxon>
        <taxon>Gammaproteobacteria</taxon>
        <taxon>Enterobacterales</taxon>
        <taxon>Enterobacteriaceae</taxon>
        <taxon>Salmonella</taxon>
    </lineage>
</organism>
<reference key="1">
    <citation type="journal article" date="2008" name="Genome Res.">
        <title>Comparative genome analysis of Salmonella enteritidis PT4 and Salmonella gallinarum 287/91 provides insights into evolutionary and host adaptation pathways.</title>
        <authorList>
            <person name="Thomson N.R."/>
            <person name="Clayton D.J."/>
            <person name="Windhorst D."/>
            <person name="Vernikos G."/>
            <person name="Davidson S."/>
            <person name="Churcher C."/>
            <person name="Quail M.A."/>
            <person name="Stevens M."/>
            <person name="Jones M.A."/>
            <person name="Watson M."/>
            <person name="Barron A."/>
            <person name="Layton A."/>
            <person name="Pickard D."/>
            <person name="Kingsley R.A."/>
            <person name="Bignell A."/>
            <person name="Clark L."/>
            <person name="Harris B."/>
            <person name="Ormond D."/>
            <person name="Abdellah Z."/>
            <person name="Brooks K."/>
            <person name="Cherevach I."/>
            <person name="Chillingworth T."/>
            <person name="Woodward J."/>
            <person name="Norberczak H."/>
            <person name="Lord A."/>
            <person name="Arrowsmith C."/>
            <person name="Jagels K."/>
            <person name="Moule S."/>
            <person name="Mungall K."/>
            <person name="Saunders M."/>
            <person name="Whitehead S."/>
            <person name="Chabalgoity J.A."/>
            <person name="Maskell D."/>
            <person name="Humphreys T."/>
            <person name="Roberts M."/>
            <person name="Barrow P.A."/>
            <person name="Dougan G."/>
            <person name="Parkhill J."/>
        </authorList>
    </citation>
    <scope>NUCLEOTIDE SEQUENCE [LARGE SCALE GENOMIC DNA]</scope>
    <source>
        <strain>287/91 / NCTC 13346</strain>
    </source>
</reference>
<name>RSXC_SALG2</name>
<gene>
    <name evidence="1" type="primary">rsxC</name>
    <name type="synonym">rnfC</name>
    <name type="ordered locus">SG1661</name>
</gene>
<keyword id="KW-0004">4Fe-4S</keyword>
<keyword id="KW-0997">Cell inner membrane</keyword>
<keyword id="KW-1003">Cell membrane</keyword>
<keyword id="KW-0249">Electron transport</keyword>
<keyword id="KW-0408">Iron</keyword>
<keyword id="KW-0411">Iron-sulfur</keyword>
<keyword id="KW-0472">Membrane</keyword>
<keyword id="KW-0479">Metal-binding</keyword>
<keyword id="KW-0677">Repeat</keyword>
<keyword id="KW-1278">Translocase</keyword>
<keyword id="KW-0813">Transport</keyword>